<gene>
    <name evidence="1" type="primary">kdpC</name>
    <name type="ordered locus">RPD_0664</name>
</gene>
<dbReference type="EMBL" id="CP000283">
    <property type="protein sequence ID" value="ABE37902.1"/>
    <property type="molecule type" value="Genomic_DNA"/>
</dbReference>
<dbReference type="SMR" id="Q13DD7"/>
<dbReference type="STRING" id="316057.RPD_0664"/>
<dbReference type="KEGG" id="rpd:RPD_0664"/>
<dbReference type="eggNOG" id="COG2156">
    <property type="taxonomic scope" value="Bacteria"/>
</dbReference>
<dbReference type="HOGENOM" id="CLU_077094_2_0_5"/>
<dbReference type="BioCyc" id="RPAL316057:RPD_RS03395-MONOMER"/>
<dbReference type="Proteomes" id="UP000001818">
    <property type="component" value="Chromosome"/>
</dbReference>
<dbReference type="GO" id="GO:0005886">
    <property type="term" value="C:plasma membrane"/>
    <property type="evidence" value="ECO:0007669"/>
    <property type="project" value="UniProtKB-SubCell"/>
</dbReference>
<dbReference type="GO" id="GO:0005524">
    <property type="term" value="F:ATP binding"/>
    <property type="evidence" value="ECO:0007669"/>
    <property type="project" value="UniProtKB-UniRule"/>
</dbReference>
<dbReference type="GO" id="GO:0008556">
    <property type="term" value="F:P-type potassium transmembrane transporter activity"/>
    <property type="evidence" value="ECO:0007669"/>
    <property type="project" value="InterPro"/>
</dbReference>
<dbReference type="HAMAP" id="MF_00276">
    <property type="entry name" value="KdpC"/>
    <property type="match status" value="1"/>
</dbReference>
<dbReference type="InterPro" id="IPR003820">
    <property type="entry name" value="KdpC"/>
</dbReference>
<dbReference type="NCBIfam" id="TIGR00681">
    <property type="entry name" value="kdpC"/>
    <property type="match status" value="1"/>
</dbReference>
<dbReference type="NCBIfam" id="NF001454">
    <property type="entry name" value="PRK00315.1"/>
    <property type="match status" value="1"/>
</dbReference>
<dbReference type="NCBIfam" id="NF010603">
    <property type="entry name" value="PRK13999.1"/>
    <property type="match status" value="1"/>
</dbReference>
<dbReference type="PANTHER" id="PTHR30042">
    <property type="entry name" value="POTASSIUM-TRANSPORTING ATPASE C CHAIN"/>
    <property type="match status" value="1"/>
</dbReference>
<dbReference type="PANTHER" id="PTHR30042:SF2">
    <property type="entry name" value="POTASSIUM-TRANSPORTING ATPASE KDPC SUBUNIT"/>
    <property type="match status" value="1"/>
</dbReference>
<dbReference type="Pfam" id="PF02669">
    <property type="entry name" value="KdpC"/>
    <property type="match status" value="1"/>
</dbReference>
<dbReference type="PIRSF" id="PIRSF001296">
    <property type="entry name" value="K_ATPase_KdpC"/>
    <property type="match status" value="1"/>
</dbReference>
<name>KDPC_RHOPS</name>
<reference key="1">
    <citation type="submission" date="2006-03" db="EMBL/GenBank/DDBJ databases">
        <title>Complete sequence of Rhodopseudomonas palustris BisB5.</title>
        <authorList>
            <consortium name="US DOE Joint Genome Institute"/>
            <person name="Copeland A."/>
            <person name="Lucas S."/>
            <person name="Lapidus A."/>
            <person name="Barry K."/>
            <person name="Detter J.C."/>
            <person name="Glavina del Rio T."/>
            <person name="Hammon N."/>
            <person name="Israni S."/>
            <person name="Dalin E."/>
            <person name="Tice H."/>
            <person name="Pitluck S."/>
            <person name="Chain P."/>
            <person name="Malfatti S."/>
            <person name="Shin M."/>
            <person name="Vergez L."/>
            <person name="Schmutz J."/>
            <person name="Larimer F."/>
            <person name="Land M."/>
            <person name="Hauser L."/>
            <person name="Pelletier D.A."/>
            <person name="Kyrpides N."/>
            <person name="Lykidis A."/>
            <person name="Oda Y."/>
            <person name="Harwood C.S."/>
            <person name="Richardson P."/>
        </authorList>
    </citation>
    <scope>NUCLEOTIDE SEQUENCE [LARGE SCALE GENOMIC DNA]</scope>
    <source>
        <strain>BisB5</strain>
    </source>
</reference>
<evidence type="ECO:0000255" key="1">
    <source>
        <dbReference type="HAMAP-Rule" id="MF_00276"/>
    </source>
</evidence>
<evidence type="ECO:0000256" key="2">
    <source>
        <dbReference type="SAM" id="MobiDB-lite"/>
    </source>
</evidence>
<sequence length="201" mass="20829">MLKEIRPALVVLVVLTVICGLAYPLAMTGIAGVLFPEQAAGSLIVKDGAVIGSALIGQEFKDDKYFHGRPSATSAADPADPTKTVSSPYNAANSSGSNLGPTSKALNDRVKEDVDKLKAENPSAAVPVDLVTASGSGLDPEISPEAALFQVPRVARARGLSEDGVRKLVNAQTKGRFAGLLGEPRVNVLALNLALDATTRK</sequence>
<keyword id="KW-0067">ATP-binding</keyword>
<keyword id="KW-0997">Cell inner membrane</keyword>
<keyword id="KW-1003">Cell membrane</keyword>
<keyword id="KW-0406">Ion transport</keyword>
<keyword id="KW-0472">Membrane</keyword>
<keyword id="KW-0547">Nucleotide-binding</keyword>
<keyword id="KW-0630">Potassium</keyword>
<keyword id="KW-0633">Potassium transport</keyword>
<keyword id="KW-0812">Transmembrane</keyword>
<keyword id="KW-1133">Transmembrane helix</keyword>
<keyword id="KW-0813">Transport</keyword>
<protein>
    <recommendedName>
        <fullName evidence="1">Potassium-transporting ATPase KdpC subunit</fullName>
    </recommendedName>
    <alternativeName>
        <fullName evidence="1">ATP phosphohydrolase [potassium-transporting] C chain</fullName>
    </alternativeName>
    <alternativeName>
        <fullName evidence="1">Potassium-binding and translocating subunit C</fullName>
    </alternativeName>
    <alternativeName>
        <fullName evidence="1">Potassium-translocating ATPase C chain</fullName>
    </alternativeName>
</protein>
<accession>Q13DD7</accession>
<proteinExistence type="inferred from homology"/>
<feature type="chain" id="PRO_1000022308" description="Potassium-transporting ATPase KdpC subunit">
    <location>
        <begin position="1"/>
        <end position="201"/>
    </location>
</feature>
<feature type="transmembrane region" description="Helical" evidence="1">
    <location>
        <begin position="10"/>
        <end position="30"/>
    </location>
</feature>
<feature type="region of interest" description="Disordered" evidence="2">
    <location>
        <begin position="67"/>
        <end position="105"/>
    </location>
</feature>
<feature type="compositionally biased region" description="Low complexity" evidence="2">
    <location>
        <begin position="70"/>
        <end position="82"/>
    </location>
</feature>
<feature type="compositionally biased region" description="Polar residues" evidence="2">
    <location>
        <begin position="83"/>
        <end position="105"/>
    </location>
</feature>
<organism>
    <name type="scientific">Rhodopseudomonas palustris (strain BisB5)</name>
    <dbReference type="NCBI Taxonomy" id="316057"/>
    <lineage>
        <taxon>Bacteria</taxon>
        <taxon>Pseudomonadati</taxon>
        <taxon>Pseudomonadota</taxon>
        <taxon>Alphaproteobacteria</taxon>
        <taxon>Hyphomicrobiales</taxon>
        <taxon>Nitrobacteraceae</taxon>
        <taxon>Rhodopseudomonas</taxon>
    </lineage>
</organism>
<comment type="function">
    <text evidence="1">Part of the high-affinity ATP-driven potassium transport (or Kdp) system, which catalyzes the hydrolysis of ATP coupled with the electrogenic transport of potassium into the cytoplasm. This subunit acts as a catalytic chaperone that increases the ATP-binding affinity of the ATP-hydrolyzing subunit KdpB by the formation of a transient KdpB/KdpC/ATP ternary complex.</text>
</comment>
<comment type="subunit">
    <text evidence="1">The system is composed of three essential subunits: KdpA, KdpB and KdpC.</text>
</comment>
<comment type="subcellular location">
    <subcellularLocation>
        <location evidence="1">Cell inner membrane</location>
        <topology evidence="1">Single-pass membrane protein</topology>
    </subcellularLocation>
</comment>
<comment type="similarity">
    <text evidence="1">Belongs to the KdpC family.</text>
</comment>